<organism>
    <name type="scientific">Enterobacter agglomerans</name>
    <name type="common">Erwinia herbicola</name>
    <name type="synonym">Pantoea agglomerans</name>
    <dbReference type="NCBI Taxonomy" id="549"/>
    <lineage>
        <taxon>Bacteria</taxon>
        <taxon>Pseudomonadati</taxon>
        <taxon>Pseudomonadota</taxon>
        <taxon>Gammaproteobacteria</taxon>
        <taxon>Enterobacterales</taxon>
        <taxon>Erwiniaceae</taxon>
        <taxon>Pantoea</taxon>
        <taxon>Pantoea agglomerans group</taxon>
    </lineage>
</organism>
<evidence type="ECO:0000250" key="1">
    <source>
        <dbReference type="UniProtKB" id="P00392"/>
    </source>
</evidence>
<evidence type="ECO:0000255" key="2">
    <source>
        <dbReference type="PROSITE-ProRule" id="PRU00280"/>
    </source>
</evidence>
<evidence type="ECO:0000305" key="3"/>
<protein>
    <recommendedName>
        <fullName>Mercuric reductase</fullName>
        <ecNumber evidence="1">1.16.1.1</ecNumber>
    </recommendedName>
    <alternativeName>
        <fullName>Hg(II) reductase</fullName>
    </alternativeName>
</protein>
<accession>P94702</accession>
<name>MERA_ENTAG</name>
<reference key="1">
    <citation type="journal article" date="1997" name="Mol. Microbiol.">
        <title>Intercontinental spread of promiscuous mercury-resistance transposons in environmental bacteria.</title>
        <authorList>
            <person name="Yurieva O."/>
            <person name="Kholodii G."/>
            <person name="Minakhin L."/>
            <person name="Gorlenko Z."/>
            <person name="Kalyaeva E."/>
            <person name="Mindlin S."/>
            <person name="Nikiforov V."/>
        </authorList>
    </citation>
    <scope>NUCLEOTIDE SEQUENCE [GENOMIC DNA]</scope>
</reference>
<proteinExistence type="inferred from homology"/>
<gene>
    <name type="primary">merA</name>
</gene>
<dbReference type="EC" id="1.16.1.1" evidence="1"/>
<dbReference type="EMBL" id="Y08992">
    <property type="protein sequence ID" value="CAA70184.1"/>
    <property type="molecule type" value="Genomic_DNA"/>
</dbReference>
<dbReference type="SMR" id="P94702"/>
<dbReference type="GO" id="GO:0050660">
    <property type="term" value="F:flavin adenine dinucleotide binding"/>
    <property type="evidence" value="ECO:0007669"/>
    <property type="project" value="InterPro"/>
</dbReference>
<dbReference type="GO" id="GO:0016152">
    <property type="term" value="F:mercury (II) reductase (NADP+) activity"/>
    <property type="evidence" value="ECO:0007669"/>
    <property type="project" value="UniProtKB-EC"/>
</dbReference>
<dbReference type="GO" id="GO:0045340">
    <property type="term" value="F:mercury ion binding"/>
    <property type="evidence" value="ECO:0007669"/>
    <property type="project" value="InterPro"/>
</dbReference>
<dbReference type="GO" id="GO:0003955">
    <property type="term" value="F:NAD(P)H dehydrogenase (quinone) activity"/>
    <property type="evidence" value="ECO:0007669"/>
    <property type="project" value="TreeGrafter"/>
</dbReference>
<dbReference type="GO" id="GO:0050661">
    <property type="term" value="F:NADP binding"/>
    <property type="evidence" value="ECO:0007669"/>
    <property type="project" value="InterPro"/>
</dbReference>
<dbReference type="GO" id="GO:0016668">
    <property type="term" value="F:oxidoreductase activity, acting on a sulfur group of donors, NAD(P) as acceptor"/>
    <property type="evidence" value="ECO:0007669"/>
    <property type="project" value="InterPro"/>
</dbReference>
<dbReference type="GO" id="GO:0050787">
    <property type="term" value="P:detoxification of mercury ion"/>
    <property type="evidence" value="ECO:0007669"/>
    <property type="project" value="InterPro"/>
</dbReference>
<dbReference type="CDD" id="cd00371">
    <property type="entry name" value="HMA"/>
    <property type="match status" value="1"/>
</dbReference>
<dbReference type="FunFam" id="3.30.390.30:FF:000001">
    <property type="entry name" value="Dihydrolipoyl dehydrogenase"/>
    <property type="match status" value="1"/>
</dbReference>
<dbReference type="Gene3D" id="3.30.390.30">
    <property type="match status" value="1"/>
</dbReference>
<dbReference type="Gene3D" id="3.30.70.100">
    <property type="match status" value="1"/>
</dbReference>
<dbReference type="Gene3D" id="3.50.50.60">
    <property type="entry name" value="FAD/NAD(P)-binding domain"/>
    <property type="match status" value="2"/>
</dbReference>
<dbReference type="InterPro" id="IPR036188">
    <property type="entry name" value="FAD/NAD-bd_sf"/>
</dbReference>
<dbReference type="InterPro" id="IPR023753">
    <property type="entry name" value="FAD/NAD-binding_dom"/>
</dbReference>
<dbReference type="InterPro" id="IPR016156">
    <property type="entry name" value="FAD/NAD-linked_Rdtase_dimer_sf"/>
</dbReference>
<dbReference type="InterPro" id="IPR017969">
    <property type="entry name" value="Heavy-metal-associated_CS"/>
</dbReference>
<dbReference type="InterPro" id="IPR006121">
    <property type="entry name" value="HMA_dom"/>
</dbReference>
<dbReference type="InterPro" id="IPR036163">
    <property type="entry name" value="HMA_dom_sf"/>
</dbReference>
<dbReference type="InterPro" id="IPR021179">
    <property type="entry name" value="Mercury_reductase_MerA"/>
</dbReference>
<dbReference type="InterPro" id="IPR001100">
    <property type="entry name" value="Pyr_nuc-diS_OxRdtase"/>
</dbReference>
<dbReference type="InterPro" id="IPR004099">
    <property type="entry name" value="Pyr_nucl-diS_OxRdtase_dimer"/>
</dbReference>
<dbReference type="InterPro" id="IPR012999">
    <property type="entry name" value="Pyr_OxRdtase_I_AS"/>
</dbReference>
<dbReference type="NCBIfam" id="TIGR02053">
    <property type="entry name" value="MerA"/>
    <property type="match status" value="1"/>
</dbReference>
<dbReference type="NCBIfam" id="NF010311">
    <property type="entry name" value="PRK13748.1"/>
    <property type="match status" value="1"/>
</dbReference>
<dbReference type="PANTHER" id="PTHR43014">
    <property type="entry name" value="MERCURIC REDUCTASE"/>
    <property type="match status" value="1"/>
</dbReference>
<dbReference type="PANTHER" id="PTHR43014:SF2">
    <property type="entry name" value="MERCURIC REDUCTASE"/>
    <property type="match status" value="1"/>
</dbReference>
<dbReference type="Pfam" id="PF00403">
    <property type="entry name" value="HMA"/>
    <property type="match status" value="1"/>
</dbReference>
<dbReference type="Pfam" id="PF07992">
    <property type="entry name" value="Pyr_redox_2"/>
    <property type="match status" value="1"/>
</dbReference>
<dbReference type="Pfam" id="PF02852">
    <property type="entry name" value="Pyr_redox_dim"/>
    <property type="match status" value="1"/>
</dbReference>
<dbReference type="PIRSF" id="PIRSF000350">
    <property type="entry name" value="Mercury_reductase_MerA"/>
    <property type="match status" value="1"/>
</dbReference>
<dbReference type="PRINTS" id="PR00945">
    <property type="entry name" value="HGRDTASE"/>
</dbReference>
<dbReference type="SUPFAM" id="SSF51905">
    <property type="entry name" value="FAD/NAD(P)-binding domain"/>
    <property type="match status" value="1"/>
</dbReference>
<dbReference type="SUPFAM" id="SSF55424">
    <property type="entry name" value="FAD/NAD-linked reductases, dimerisation (C-terminal) domain"/>
    <property type="match status" value="1"/>
</dbReference>
<dbReference type="SUPFAM" id="SSF55008">
    <property type="entry name" value="HMA, heavy metal-associated domain"/>
    <property type="match status" value="1"/>
</dbReference>
<dbReference type="PROSITE" id="PS01047">
    <property type="entry name" value="HMA_1"/>
    <property type="match status" value="1"/>
</dbReference>
<dbReference type="PROSITE" id="PS50846">
    <property type="entry name" value="HMA_2"/>
    <property type="match status" value="1"/>
</dbReference>
<dbReference type="PROSITE" id="PS00076">
    <property type="entry name" value="PYRIDINE_REDOX_1"/>
    <property type="match status" value="1"/>
</dbReference>
<keyword id="KW-1015">Disulfide bond</keyword>
<keyword id="KW-0274">FAD</keyword>
<keyword id="KW-0285">Flavoprotein</keyword>
<keyword id="KW-0475">Mercuric resistance</keyword>
<keyword id="KW-0476">Mercury</keyword>
<keyword id="KW-0479">Metal-binding</keyword>
<keyword id="KW-0521">NADP</keyword>
<keyword id="KW-0560">Oxidoreductase</keyword>
<keyword id="KW-0614">Plasmid</keyword>
<keyword id="KW-0676">Redox-active center</keyword>
<geneLocation type="plasmid">
    <name>pKLH272</name>
</geneLocation>
<sequence>MTTLKITGMTCDSCAAHVKEALEKVPGVQSALVSYPKGTAQLAIEAGTSSDALTTAVAGLGYEATLADAPPTDNRAGLLDKMRGWIGAADKPSGNERPLQVVVIGSGGAAMAAALKAVEQGAQVTLIERGTIGGTCVNVGCVPSKIMIRVAHIAHLRRESPFDGGMPPTSPTILRERLLAQQQARVEELRHAKYEGILDGNSAITVLHGEARFKDDQSLIVSLNEGGERVVMFDRCLVATGASPAVPPIPGLKESPYWTSTEALASDTIPERLAVIGSSVVALELAQAFARLGSKVTALARNTLFFREDPAIGEAVTAAFRAEGIEVLEHTQASQVAHMDGEFVLTTTHGELRADKLLVATGRTPNTRSLALEAAGVAVNAQGAIVIDKGMRTSSPNIYAAGDCTDQPQFVYVAAAAGTRAAINMTGGDAALDLTAMPAVVFTDPQVATVGYSEAEAHHDGIETDSRLLTLDNVPRALANFDTRGFIKLVIEEGSGRLIGVQAVAPEAGELIQTAVLAIRNRMTVQELADQLFPYLTMVEGLKLAAQTFSKDVKQLSCCAG</sequence>
<comment type="function">
    <text evidence="1">Resistance to Hg(2+) in bacteria appears to be governed by a specialized system which includes mercuric reductase. MerA protein is responsible for volatilizing mercury as Hg(0).</text>
</comment>
<comment type="catalytic activity">
    <reaction evidence="1">
        <text>Hg + NADP(+) + H(+) = Hg(2+) + NADPH</text>
        <dbReference type="Rhea" id="RHEA:23856"/>
        <dbReference type="ChEBI" id="CHEBI:15378"/>
        <dbReference type="ChEBI" id="CHEBI:16170"/>
        <dbReference type="ChEBI" id="CHEBI:16793"/>
        <dbReference type="ChEBI" id="CHEBI:57783"/>
        <dbReference type="ChEBI" id="CHEBI:58349"/>
        <dbReference type="EC" id="1.16.1.1"/>
    </reaction>
</comment>
<comment type="cofactor">
    <cofactor evidence="1">
        <name>FAD</name>
        <dbReference type="ChEBI" id="CHEBI:57692"/>
    </cofactor>
    <text evidence="1">Binds 1 FAD per subunit.</text>
</comment>
<comment type="subunit">
    <text evidence="1">Homodimer.</text>
</comment>
<comment type="miscellaneous">
    <text evidence="1">The active site is a redox-active disulfide bond.</text>
</comment>
<comment type="similarity">
    <text evidence="3">Belongs to the class-I pyridine nucleotide-disulfide oxidoreductase family.</text>
</comment>
<feature type="chain" id="PRO_0000067996" description="Mercuric reductase">
    <location>
        <begin position="1"/>
        <end position="561"/>
    </location>
</feature>
<feature type="domain" description="HMA" evidence="2">
    <location>
        <begin position="1"/>
        <end position="65"/>
    </location>
</feature>
<feature type="binding site" evidence="2">
    <location>
        <position position="11"/>
    </location>
    <ligand>
        <name>a metal cation</name>
        <dbReference type="ChEBI" id="CHEBI:25213"/>
    </ligand>
</feature>
<feature type="binding site" evidence="2">
    <location>
        <position position="14"/>
    </location>
    <ligand>
        <name>a metal cation</name>
        <dbReference type="ChEBI" id="CHEBI:25213"/>
    </ligand>
</feature>
<feature type="binding site" evidence="1">
    <location>
        <position position="110"/>
    </location>
    <ligand>
        <name>FAD</name>
        <dbReference type="ChEBI" id="CHEBI:57692"/>
    </ligand>
</feature>
<feature type="binding site" evidence="1">
    <location>
        <position position="130"/>
    </location>
    <ligand>
        <name>FAD</name>
        <dbReference type="ChEBI" id="CHEBI:57692"/>
    </ligand>
</feature>
<feature type="binding site" evidence="1">
    <location>
        <position position="135"/>
    </location>
    <ligand>
        <name>FAD</name>
        <dbReference type="ChEBI" id="CHEBI:57692"/>
    </ligand>
</feature>
<feature type="binding site" evidence="1">
    <location>
        <position position="145"/>
    </location>
    <ligand>
        <name>FAD</name>
        <dbReference type="ChEBI" id="CHEBI:57692"/>
    </ligand>
</feature>
<feature type="binding site" evidence="1">
    <location>
        <position position="211"/>
    </location>
    <ligand>
        <name>FAD</name>
        <dbReference type="ChEBI" id="CHEBI:57692"/>
    </ligand>
</feature>
<feature type="binding site" evidence="1">
    <location>
        <position position="403"/>
    </location>
    <ligand>
        <name>FAD</name>
        <dbReference type="ChEBI" id="CHEBI:57692"/>
    </ligand>
</feature>
<feature type="binding site" evidence="1">
    <location>
        <position position="411"/>
    </location>
    <ligand>
        <name>FAD</name>
        <dbReference type="ChEBI" id="CHEBI:57692"/>
    </ligand>
</feature>
<feature type="binding site" evidence="1">
    <location>
        <position position="558"/>
    </location>
    <ligand>
        <name>Hg(2+)</name>
        <dbReference type="ChEBI" id="CHEBI:16793"/>
    </ligand>
</feature>
<feature type="binding site" evidence="1">
    <location>
        <position position="559"/>
    </location>
    <ligand>
        <name>Hg(2+)</name>
        <dbReference type="ChEBI" id="CHEBI:16793"/>
    </ligand>
</feature>
<feature type="disulfide bond" description="Redox-active" evidence="1">
    <location>
        <begin position="136"/>
        <end position="141"/>
    </location>
</feature>